<feature type="chain" id="PRO_0000135836" description="Histidinol dehydrogenase">
    <location>
        <begin position="1"/>
        <end position="434"/>
    </location>
</feature>
<feature type="active site" description="Proton acceptor" evidence="1">
    <location>
        <position position="326"/>
    </location>
</feature>
<feature type="active site" description="Proton acceptor" evidence="1">
    <location>
        <position position="327"/>
    </location>
</feature>
<feature type="binding site" evidence="1">
    <location>
        <position position="130"/>
    </location>
    <ligand>
        <name>NAD(+)</name>
        <dbReference type="ChEBI" id="CHEBI:57540"/>
    </ligand>
</feature>
<feature type="binding site" evidence="1">
    <location>
        <position position="188"/>
    </location>
    <ligand>
        <name>NAD(+)</name>
        <dbReference type="ChEBI" id="CHEBI:57540"/>
    </ligand>
</feature>
<feature type="binding site" evidence="1">
    <location>
        <position position="211"/>
    </location>
    <ligand>
        <name>NAD(+)</name>
        <dbReference type="ChEBI" id="CHEBI:57540"/>
    </ligand>
</feature>
<feature type="binding site" evidence="1">
    <location>
        <position position="237"/>
    </location>
    <ligand>
        <name>substrate</name>
    </ligand>
</feature>
<feature type="binding site" evidence="1">
    <location>
        <position position="259"/>
    </location>
    <ligand>
        <name>substrate</name>
    </ligand>
</feature>
<feature type="binding site" evidence="1">
    <location>
        <position position="259"/>
    </location>
    <ligand>
        <name>Zn(2+)</name>
        <dbReference type="ChEBI" id="CHEBI:29105"/>
    </ligand>
</feature>
<feature type="binding site" evidence="1">
    <location>
        <position position="262"/>
    </location>
    <ligand>
        <name>substrate</name>
    </ligand>
</feature>
<feature type="binding site" evidence="1">
    <location>
        <position position="262"/>
    </location>
    <ligand>
        <name>Zn(2+)</name>
        <dbReference type="ChEBI" id="CHEBI:29105"/>
    </ligand>
</feature>
<feature type="binding site" evidence="1">
    <location>
        <position position="327"/>
    </location>
    <ligand>
        <name>substrate</name>
    </ligand>
</feature>
<feature type="binding site" evidence="1">
    <location>
        <position position="360"/>
    </location>
    <ligand>
        <name>substrate</name>
    </ligand>
</feature>
<feature type="binding site" evidence="1">
    <location>
        <position position="360"/>
    </location>
    <ligand>
        <name>Zn(2+)</name>
        <dbReference type="ChEBI" id="CHEBI:29105"/>
    </ligand>
</feature>
<feature type="binding site" evidence="1">
    <location>
        <position position="414"/>
    </location>
    <ligand>
        <name>substrate</name>
    </ligand>
</feature>
<feature type="binding site" evidence="1">
    <location>
        <position position="419"/>
    </location>
    <ligand>
        <name>substrate</name>
    </ligand>
</feature>
<feature type="binding site" evidence="1">
    <location>
        <position position="419"/>
    </location>
    <ligand>
        <name>Zn(2+)</name>
        <dbReference type="ChEBI" id="CHEBI:29105"/>
    </ligand>
</feature>
<organism>
    <name type="scientific">Salmonella choleraesuis (strain SC-B67)</name>
    <dbReference type="NCBI Taxonomy" id="321314"/>
    <lineage>
        <taxon>Bacteria</taxon>
        <taxon>Pseudomonadati</taxon>
        <taxon>Pseudomonadota</taxon>
        <taxon>Gammaproteobacteria</taxon>
        <taxon>Enterobacterales</taxon>
        <taxon>Enterobacteriaceae</taxon>
        <taxon>Salmonella</taxon>
    </lineage>
</organism>
<name>HISX_SALCH</name>
<evidence type="ECO:0000255" key="1">
    <source>
        <dbReference type="HAMAP-Rule" id="MF_01024"/>
    </source>
</evidence>
<accession>Q57MS3</accession>
<proteinExistence type="inferred from homology"/>
<gene>
    <name evidence="1" type="primary">hisD</name>
    <name type="ordered locus">SCH_2082</name>
</gene>
<dbReference type="EC" id="1.1.1.23" evidence="1"/>
<dbReference type="EMBL" id="AE017220">
    <property type="protein sequence ID" value="AAX65988.1"/>
    <property type="molecule type" value="Genomic_DNA"/>
</dbReference>
<dbReference type="RefSeq" id="WP_000009632.1">
    <property type="nucleotide sequence ID" value="NC_006905.1"/>
</dbReference>
<dbReference type="SMR" id="Q57MS3"/>
<dbReference type="KEGG" id="sec:SCH_2082"/>
<dbReference type="HOGENOM" id="CLU_006732_3_0_6"/>
<dbReference type="UniPathway" id="UPA00031">
    <property type="reaction ID" value="UER00014"/>
</dbReference>
<dbReference type="Proteomes" id="UP000000538">
    <property type="component" value="Chromosome"/>
</dbReference>
<dbReference type="GO" id="GO:0005829">
    <property type="term" value="C:cytosol"/>
    <property type="evidence" value="ECO:0007669"/>
    <property type="project" value="TreeGrafter"/>
</dbReference>
<dbReference type="GO" id="GO:0004399">
    <property type="term" value="F:histidinol dehydrogenase activity"/>
    <property type="evidence" value="ECO:0007669"/>
    <property type="project" value="UniProtKB-UniRule"/>
</dbReference>
<dbReference type="GO" id="GO:0051287">
    <property type="term" value="F:NAD binding"/>
    <property type="evidence" value="ECO:0007669"/>
    <property type="project" value="InterPro"/>
</dbReference>
<dbReference type="GO" id="GO:0008270">
    <property type="term" value="F:zinc ion binding"/>
    <property type="evidence" value="ECO:0007669"/>
    <property type="project" value="UniProtKB-UniRule"/>
</dbReference>
<dbReference type="GO" id="GO:0000105">
    <property type="term" value="P:L-histidine biosynthetic process"/>
    <property type="evidence" value="ECO:0007669"/>
    <property type="project" value="UniProtKB-UniRule"/>
</dbReference>
<dbReference type="CDD" id="cd06572">
    <property type="entry name" value="Histidinol_dh"/>
    <property type="match status" value="1"/>
</dbReference>
<dbReference type="FunFam" id="1.20.5.1300:FF:000001">
    <property type="entry name" value="Histidine biosynthesis trifunctional protein"/>
    <property type="match status" value="1"/>
</dbReference>
<dbReference type="FunFam" id="3.40.50.1980:FF:000001">
    <property type="entry name" value="Histidinol dehydrogenase"/>
    <property type="match status" value="1"/>
</dbReference>
<dbReference type="Gene3D" id="1.20.5.1300">
    <property type="match status" value="1"/>
</dbReference>
<dbReference type="Gene3D" id="3.40.50.1980">
    <property type="entry name" value="Nitrogenase molybdenum iron protein domain"/>
    <property type="match status" value="2"/>
</dbReference>
<dbReference type="HAMAP" id="MF_01024">
    <property type="entry name" value="HisD"/>
    <property type="match status" value="1"/>
</dbReference>
<dbReference type="InterPro" id="IPR016161">
    <property type="entry name" value="Ald_DH/histidinol_DH"/>
</dbReference>
<dbReference type="InterPro" id="IPR001692">
    <property type="entry name" value="Histidinol_DH_CS"/>
</dbReference>
<dbReference type="InterPro" id="IPR022695">
    <property type="entry name" value="Histidinol_DH_monofunct"/>
</dbReference>
<dbReference type="InterPro" id="IPR012131">
    <property type="entry name" value="Hstdl_DH"/>
</dbReference>
<dbReference type="NCBIfam" id="TIGR00069">
    <property type="entry name" value="hisD"/>
    <property type="match status" value="1"/>
</dbReference>
<dbReference type="PANTHER" id="PTHR21256:SF2">
    <property type="entry name" value="HISTIDINE BIOSYNTHESIS TRIFUNCTIONAL PROTEIN"/>
    <property type="match status" value="1"/>
</dbReference>
<dbReference type="PANTHER" id="PTHR21256">
    <property type="entry name" value="HISTIDINOL DEHYDROGENASE HDH"/>
    <property type="match status" value="1"/>
</dbReference>
<dbReference type="Pfam" id="PF00815">
    <property type="entry name" value="Histidinol_dh"/>
    <property type="match status" value="1"/>
</dbReference>
<dbReference type="PIRSF" id="PIRSF000099">
    <property type="entry name" value="Histidinol_dh"/>
    <property type="match status" value="1"/>
</dbReference>
<dbReference type="PRINTS" id="PR00083">
    <property type="entry name" value="HOLDHDRGNASE"/>
</dbReference>
<dbReference type="SUPFAM" id="SSF53720">
    <property type="entry name" value="ALDH-like"/>
    <property type="match status" value="1"/>
</dbReference>
<dbReference type="PROSITE" id="PS00611">
    <property type="entry name" value="HISOL_DEHYDROGENASE"/>
    <property type="match status" value="1"/>
</dbReference>
<reference key="1">
    <citation type="journal article" date="2005" name="Nucleic Acids Res.">
        <title>The genome sequence of Salmonella enterica serovar Choleraesuis, a highly invasive and resistant zoonotic pathogen.</title>
        <authorList>
            <person name="Chiu C.-H."/>
            <person name="Tang P."/>
            <person name="Chu C."/>
            <person name="Hu S."/>
            <person name="Bao Q."/>
            <person name="Yu J."/>
            <person name="Chou Y.-Y."/>
            <person name="Wang H.-S."/>
            <person name="Lee Y.-S."/>
        </authorList>
    </citation>
    <scope>NUCLEOTIDE SEQUENCE [LARGE SCALE GENOMIC DNA]</scope>
    <source>
        <strain>SC-B67</strain>
    </source>
</reference>
<keyword id="KW-0028">Amino-acid biosynthesis</keyword>
<keyword id="KW-0368">Histidine biosynthesis</keyword>
<keyword id="KW-0479">Metal-binding</keyword>
<keyword id="KW-0520">NAD</keyword>
<keyword id="KW-0560">Oxidoreductase</keyword>
<keyword id="KW-0862">Zinc</keyword>
<protein>
    <recommendedName>
        <fullName evidence="1">Histidinol dehydrogenase</fullName>
        <shortName evidence="1">HDH</shortName>
        <ecNumber evidence="1">1.1.1.23</ecNumber>
    </recommendedName>
</protein>
<sequence length="434" mass="45828">MSFNTLINWNSCSPEQQRALLTRPAISASDSITRTVSDILDNVKTRGDDALREYSAKFDKTEVTALRVTPEEIAAAGARLSDELKQAMAAAVKNIETFHSAQTLPPVDVETQPGVRCQQVTRPVASVGLYIPGGSAPLFSTVLMLATPARIAGCQNVVLCSPPPIADEILYAAQLCGVQEIFNVGGAQAIAALAFGSESVPKVDKIFGPGNAFVTEAKRQVSQRLDGAAIDMPAGPSEVLVIADSGATPDFVASDLLSQAEHGPDSQVILLTPDADIARKVAEAVERQLAELPRADTARQALSASRLIVTKDLAQCVAISNQYGPEHLIIQTRNARDLVDAITSAGSVFLGDWSPESAGDYASGTNHVLPTYGYTATCSSLGLADFQKRMTVQELSKAGFSALASTIETLAAAERLTAHKNAVTLRVNALKEQA</sequence>
<comment type="function">
    <text evidence="1">Catalyzes the sequential NAD-dependent oxidations of L-histidinol to L-histidinaldehyde and then to L-histidine.</text>
</comment>
<comment type="catalytic activity">
    <reaction evidence="1">
        <text>L-histidinol + 2 NAD(+) + H2O = L-histidine + 2 NADH + 3 H(+)</text>
        <dbReference type="Rhea" id="RHEA:20641"/>
        <dbReference type="ChEBI" id="CHEBI:15377"/>
        <dbReference type="ChEBI" id="CHEBI:15378"/>
        <dbReference type="ChEBI" id="CHEBI:57540"/>
        <dbReference type="ChEBI" id="CHEBI:57595"/>
        <dbReference type="ChEBI" id="CHEBI:57699"/>
        <dbReference type="ChEBI" id="CHEBI:57945"/>
        <dbReference type="EC" id="1.1.1.23"/>
    </reaction>
</comment>
<comment type="cofactor">
    <cofactor evidence="1">
        <name>Zn(2+)</name>
        <dbReference type="ChEBI" id="CHEBI:29105"/>
    </cofactor>
    <text evidence="1">Binds 1 zinc ion per subunit.</text>
</comment>
<comment type="pathway">
    <text evidence="1">Amino-acid biosynthesis; L-histidine biosynthesis; L-histidine from 5-phospho-alpha-D-ribose 1-diphosphate: step 9/9.</text>
</comment>
<comment type="subunit">
    <text evidence="1">Homodimer.</text>
</comment>
<comment type="similarity">
    <text evidence="1">Belongs to the histidinol dehydrogenase family.</text>
</comment>